<dbReference type="EC" id="7.3.2.6" evidence="2"/>
<dbReference type="EMBL" id="AJ248283">
    <property type="protein sequence ID" value="CAB49078.1"/>
    <property type="molecule type" value="Genomic_DNA"/>
</dbReference>
<dbReference type="EMBL" id="HE613800">
    <property type="protein sequence ID" value="CCE69530.1"/>
    <property type="molecule type" value="Genomic_DNA"/>
</dbReference>
<dbReference type="PIR" id="G75203">
    <property type="entry name" value="G75203"/>
</dbReference>
<dbReference type="RefSeq" id="WP_010867278.1">
    <property type="nucleotide sequence ID" value="NC_000868.1"/>
</dbReference>
<dbReference type="SMR" id="Q9V2C0"/>
<dbReference type="STRING" id="272844.PAB0103"/>
<dbReference type="KEGG" id="pab:PAB0103"/>
<dbReference type="PATRIC" id="fig|272844.11.peg.167"/>
<dbReference type="eggNOG" id="arCOG00175">
    <property type="taxonomic scope" value="Archaea"/>
</dbReference>
<dbReference type="HOGENOM" id="CLU_000604_1_1_2"/>
<dbReference type="OrthoDB" id="18368at2157"/>
<dbReference type="PhylomeDB" id="Q9V2C0"/>
<dbReference type="Proteomes" id="UP000000810">
    <property type="component" value="Chromosome"/>
</dbReference>
<dbReference type="Proteomes" id="UP000009139">
    <property type="component" value="Chromosome"/>
</dbReference>
<dbReference type="GO" id="GO:0005886">
    <property type="term" value="C:plasma membrane"/>
    <property type="evidence" value="ECO:0007669"/>
    <property type="project" value="UniProtKB-SubCell"/>
</dbReference>
<dbReference type="GO" id="GO:1901238">
    <property type="term" value="F:ABC-type tungstate transporter activity"/>
    <property type="evidence" value="ECO:0007669"/>
    <property type="project" value="UniProtKB-EC"/>
</dbReference>
<dbReference type="GO" id="GO:0005524">
    <property type="term" value="F:ATP binding"/>
    <property type="evidence" value="ECO:0007669"/>
    <property type="project" value="UniProtKB-KW"/>
</dbReference>
<dbReference type="GO" id="GO:0016887">
    <property type="term" value="F:ATP hydrolysis activity"/>
    <property type="evidence" value="ECO:0007669"/>
    <property type="project" value="InterPro"/>
</dbReference>
<dbReference type="GO" id="GO:0015689">
    <property type="term" value="P:molybdate ion transport"/>
    <property type="evidence" value="ECO:0007669"/>
    <property type="project" value="InterPro"/>
</dbReference>
<dbReference type="CDD" id="cd03299">
    <property type="entry name" value="ABC_ModC_like"/>
    <property type="match status" value="1"/>
</dbReference>
<dbReference type="FunFam" id="3.40.50.300:FF:000425">
    <property type="entry name" value="Probable ABC transporter, ATP-binding subunit"/>
    <property type="match status" value="1"/>
</dbReference>
<dbReference type="Gene3D" id="2.40.50.100">
    <property type="match status" value="1"/>
</dbReference>
<dbReference type="Gene3D" id="3.40.50.300">
    <property type="entry name" value="P-loop containing nucleotide triphosphate hydrolases"/>
    <property type="match status" value="1"/>
</dbReference>
<dbReference type="InterPro" id="IPR003593">
    <property type="entry name" value="AAA+_ATPase"/>
</dbReference>
<dbReference type="InterPro" id="IPR050093">
    <property type="entry name" value="ABC_SmlMolc_Importer"/>
</dbReference>
<dbReference type="InterPro" id="IPR003439">
    <property type="entry name" value="ABC_transporter-like_ATP-bd"/>
</dbReference>
<dbReference type="InterPro" id="IPR017871">
    <property type="entry name" value="ABC_transporter-like_CS"/>
</dbReference>
<dbReference type="InterPro" id="IPR008995">
    <property type="entry name" value="Mo/tungstate-bd_C_term_dom"/>
</dbReference>
<dbReference type="InterPro" id="IPR053428">
    <property type="entry name" value="Molybdate/tungstate_ABC-ATPase"/>
</dbReference>
<dbReference type="InterPro" id="IPR004606">
    <property type="entry name" value="Mop_domain"/>
</dbReference>
<dbReference type="InterPro" id="IPR027417">
    <property type="entry name" value="P-loop_NTPase"/>
</dbReference>
<dbReference type="InterPro" id="IPR005116">
    <property type="entry name" value="Transp-assoc_OB_typ1"/>
</dbReference>
<dbReference type="NCBIfam" id="TIGR00638">
    <property type="entry name" value="Mop"/>
    <property type="match status" value="1"/>
</dbReference>
<dbReference type="NCBIfam" id="NF040840">
    <property type="entry name" value="tungstate_WtpC"/>
    <property type="match status" value="1"/>
</dbReference>
<dbReference type="PANTHER" id="PTHR42781">
    <property type="entry name" value="SPERMIDINE/PUTRESCINE IMPORT ATP-BINDING PROTEIN POTA"/>
    <property type="match status" value="1"/>
</dbReference>
<dbReference type="PANTHER" id="PTHR42781:SF4">
    <property type="entry name" value="SPERMIDINE_PUTRESCINE IMPORT ATP-BINDING PROTEIN POTA"/>
    <property type="match status" value="1"/>
</dbReference>
<dbReference type="Pfam" id="PF00005">
    <property type="entry name" value="ABC_tran"/>
    <property type="match status" value="1"/>
</dbReference>
<dbReference type="Pfam" id="PF03459">
    <property type="entry name" value="TOBE"/>
    <property type="match status" value="1"/>
</dbReference>
<dbReference type="SMART" id="SM00382">
    <property type="entry name" value="AAA"/>
    <property type="match status" value="1"/>
</dbReference>
<dbReference type="SUPFAM" id="SSF50331">
    <property type="entry name" value="MOP-like"/>
    <property type="match status" value="1"/>
</dbReference>
<dbReference type="SUPFAM" id="SSF52540">
    <property type="entry name" value="P-loop containing nucleoside triphosphate hydrolases"/>
    <property type="match status" value="1"/>
</dbReference>
<dbReference type="PROSITE" id="PS00211">
    <property type="entry name" value="ABC_TRANSPORTER_1"/>
    <property type="match status" value="1"/>
</dbReference>
<dbReference type="PROSITE" id="PS50893">
    <property type="entry name" value="ABC_TRANSPORTER_2"/>
    <property type="match status" value="1"/>
</dbReference>
<dbReference type="PROSITE" id="PS51866">
    <property type="entry name" value="MOP"/>
    <property type="match status" value="1"/>
</dbReference>
<name>WTPC_PYRAB</name>
<comment type="function">
    <text evidence="2">Part of the ABC transporter complex WtpABC involved in molybdate/tungstate import. Responsible for energy coupling to the transport system.</text>
</comment>
<comment type="catalytic activity">
    <reaction evidence="2">
        <text>tungstate(in) + ATP + H2O = tungstate(out) + ADP + phosphate + H(+)</text>
        <dbReference type="Rhea" id="RHEA:35027"/>
        <dbReference type="ChEBI" id="CHEBI:15377"/>
        <dbReference type="ChEBI" id="CHEBI:15378"/>
        <dbReference type="ChEBI" id="CHEBI:30616"/>
        <dbReference type="ChEBI" id="CHEBI:43474"/>
        <dbReference type="ChEBI" id="CHEBI:46502"/>
        <dbReference type="ChEBI" id="CHEBI:456216"/>
        <dbReference type="EC" id="7.3.2.6"/>
    </reaction>
</comment>
<comment type="subunit">
    <text evidence="1">The complex is composed of two ATP-binding proteins (WtpC), two transmembrane proteins (WtpB) and a solute-binding protein (WtpA).</text>
</comment>
<comment type="subcellular location">
    <subcellularLocation>
        <location evidence="1">Cell membrane</location>
        <topology evidence="1">Peripheral membrane protein</topology>
    </subcellularLocation>
</comment>
<comment type="similarity">
    <text evidence="5">Belongs to the ABC transporter superfamily. Sulfate/tungstate importer (TC 3.A.1.6) family.</text>
</comment>
<accession>Q9V2C0</accession>
<accession>G8ZFY9</accession>
<feature type="chain" id="PRO_0000338502" description="Molybdate/tungstate import ATP-binding protein WtpC">
    <location>
        <begin position="1"/>
        <end position="344"/>
    </location>
</feature>
<feature type="domain" description="ABC transporter" evidence="3">
    <location>
        <begin position="2"/>
        <end position="231"/>
    </location>
</feature>
<feature type="domain" description="Mop" evidence="4">
    <location>
        <begin position="280"/>
        <end position="344"/>
    </location>
</feature>
<feature type="binding site" evidence="3">
    <location>
        <begin position="33"/>
        <end position="40"/>
    </location>
    <ligand>
        <name>ATP</name>
        <dbReference type="ChEBI" id="CHEBI:30616"/>
    </ligand>
</feature>
<reference key="1">
    <citation type="journal article" date="2003" name="Mol. Microbiol.">
        <title>An integrated analysis of the genome of the hyperthermophilic archaeon Pyrococcus abyssi.</title>
        <authorList>
            <person name="Cohen G.N."/>
            <person name="Barbe V."/>
            <person name="Flament D."/>
            <person name="Galperin M."/>
            <person name="Heilig R."/>
            <person name="Lecompte O."/>
            <person name="Poch O."/>
            <person name="Prieur D."/>
            <person name="Querellou J."/>
            <person name="Ripp R."/>
            <person name="Thierry J.-C."/>
            <person name="Van der Oost J."/>
            <person name="Weissenbach J."/>
            <person name="Zivanovic Y."/>
            <person name="Forterre P."/>
        </authorList>
    </citation>
    <scope>NUCLEOTIDE SEQUENCE [LARGE SCALE GENOMIC DNA]</scope>
    <source>
        <strain>GE5 / Orsay</strain>
    </source>
</reference>
<reference key="2">
    <citation type="journal article" date="2012" name="Curr. Microbiol.">
        <title>Re-annotation of two hyperthermophilic archaea Pyrococcus abyssi GE5 and Pyrococcus furiosus DSM 3638.</title>
        <authorList>
            <person name="Gao J."/>
            <person name="Wang J."/>
        </authorList>
    </citation>
    <scope>GENOME REANNOTATION</scope>
    <source>
        <strain>GE5 / Orsay</strain>
    </source>
</reference>
<protein>
    <recommendedName>
        <fullName>Molybdate/tungstate import ATP-binding protein WtpC</fullName>
        <ecNumber evidence="2">7.3.2.6</ecNumber>
    </recommendedName>
</protein>
<gene>
    <name type="primary">wtpC</name>
    <name type="ordered locus">PYRAB01540</name>
    <name type="ORF">PAB0103</name>
</gene>
<proteinExistence type="inferred from homology"/>
<sequence>MLRVESVSKDYKEFKLRDISFDVKKEEHFIILGPSGAGKTVLLEIIAGIIEPDEGRIILNGVDVTSYPPEKRNLAYIPQDYALFPHMTVYDNIAFGLKLRRISRQEIDRKVKEISKVLGIEHLLHRKPRTLSGGEKQRVAIARALVIEPELLLLDEPFANLDVQTKSRFMTEMKVWRKELGFTSLHVTHSFEEAISLGDRVGVMLRGRLVQVGDVKEVFSNPVDEGVARFLGFENIIEGVAKGNILEANGVKITLPISVEGKVRIGVRPEDIILSTEPVKTSARNEFRAEVIGIEELGPLVRVNLKIGGITLKAFITRSSLIELGISEGREVYVSFKTSAIKVF</sequence>
<organism>
    <name type="scientific">Pyrococcus abyssi (strain GE5 / Orsay)</name>
    <dbReference type="NCBI Taxonomy" id="272844"/>
    <lineage>
        <taxon>Archaea</taxon>
        <taxon>Methanobacteriati</taxon>
        <taxon>Methanobacteriota</taxon>
        <taxon>Thermococci</taxon>
        <taxon>Thermococcales</taxon>
        <taxon>Thermococcaceae</taxon>
        <taxon>Pyrococcus</taxon>
    </lineage>
</organism>
<evidence type="ECO:0000250" key="1"/>
<evidence type="ECO:0000250" key="2">
    <source>
        <dbReference type="UniProtKB" id="Q8U4K3"/>
    </source>
</evidence>
<evidence type="ECO:0000255" key="3">
    <source>
        <dbReference type="PROSITE-ProRule" id="PRU00434"/>
    </source>
</evidence>
<evidence type="ECO:0000255" key="4">
    <source>
        <dbReference type="PROSITE-ProRule" id="PRU01213"/>
    </source>
</evidence>
<evidence type="ECO:0000305" key="5"/>
<keyword id="KW-0067">ATP-binding</keyword>
<keyword id="KW-1003">Cell membrane</keyword>
<keyword id="KW-0472">Membrane</keyword>
<keyword id="KW-0500">Molybdenum</keyword>
<keyword id="KW-0547">Nucleotide-binding</keyword>
<keyword id="KW-1278">Translocase</keyword>
<keyword id="KW-0813">Transport</keyword>